<comment type="function">
    <text evidence="1 9 11">Gal/GalNAc-specific agglutinin. Behaves as a type-2 ribosome-inactivating protein. Inhibits mammalian ribosomes (PubMed:10785398). The A chain is responsible for inhibiting protein synthesis through the catalytic inactivation of 60S ribosomal subunits by removing adenine from position 4,324 of 28S rRNA (Probable). The B chain binds to cell receptors and probably facilitates the entry into the cell of the A chain; B chains are also responsible for cell agglutination (lectin activity) (Probable). Involved in plant defense against insects (By similarity). Has very low cytotoxic activity against the human tumor cell line Molt4, but higher against CEM (PubMed:10785398).</text>
</comment>
<comment type="catalytic activity">
    <reaction evidence="5 8 9">
        <text>Endohydrolysis of the N-glycosidic bond at one specific adenosine on the 28S rRNA.</text>
        <dbReference type="EC" id="3.2.2.22"/>
    </reaction>
</comment>
<comment type="activity regulation">
    <text evidence="9">Strongly inhibited by asialofetuin and asialomucin.</text>
</comment>
<comment type="subunit">
    <text evidence="9">Disulfide-linked dimer of A and B chains.</text>
</comment>
<comment type="tissue specificity">
    <text evidence="9">Expressed in rhizome and abundantly in leaves (at protein level).</text>
</comment>
<comment type="domain">
    <text evidence="3">The B-chain consists of six tandemly repeated subdomains. Only subdomains 1-alpha and 2-gamma possess a functional carbohydrate-binding site.</text>
</comment>
<comment type="PTM">
    <text evidence="9">The precursor is processed in two chains, A and B, that are linked by a disulfide bond.</text>
</comment>
<comment type="PTM">
    <text evidence="9">Glycosylated.</text>
</comment>
<comment type="PTM">
    <text evidence="9">The N-terminus is blocked.</text>
</comment>
<comment type="similarity">
    <text evidence="11">Belongs to the ribosome-inactivating protein family. Type 2 RIP subfamily.</text>
</comment>
<sequence>MRVVAAILYINVVVALICGLGIQGGALDLQDYPSVSFQGDAMQLQDYPSITFNLKGATWQTYRDFIEKLREIVTRGATTIAGTSIPVLNRVVPDSRRFVYVRLINLDGNVVTIAVDVTSLYVVAFSANNNGYFFSDSTETERTNLFVGIPRGDPLGFTGNYNSLENWAGADRGSIPLGPALLNKAIRNLRSNGRDSKAAKSLIVVIQMVSEAARFRRIEEQVRRSIADQDTFTPGSLMITMEKKWSKMSQQVERSVNDQGIFTGIFTRTVQLIDDNLQTLNIDNFNALSLHTMLAILLFRCRTTTSSHNTLPAASNIVLMGEDYVDKDDEKCTVGEPTRRISGRAGWCVDVKDGRDNDGNPIQVLSCGDGQERKQQWTFHRDGTIRSKLGKCMTAYGFKHGEYVMIYDCDTAIAGANKWVVSIDGTITNPISGLVLTAPRGATGTTLLVEKNVHAARQCWRVGDDVEPIVTKIVGFQEKCLEANYLENTNVSRYTKVFLDDCVLDRQQQRWALYSDGTIRADSDRSLRVTADGHRSLDSIIILACKGWGNQRWVFNTDGTILNPNAKLVMDVKDSDVSLLQIILHQSTGKPNQKWLTVTLPRTS</sequence>
<name>RIPM_POLML</name>
<accession>Q9M654</accession>
<organism evidence="13">
    <name type="scientific">Polygonatum multiflorum</name>
    <name type="common">Solomon's seal</name>
    <name type="synonym">Convallaria multiflora</name>
    <dbReference type="NCBI Taxonomy" id="45371"/>
    <lineage>
        <taxon>Eukaryota</taxon>
        <taxon>Viridiplantae</taxon>
        <taxon>Streptophyta</taxon>
        <taxon>Embryophyta</taxon>
        <taxon>Tracheophyta</taxon>
        <taxon>Spermatophyta</taxon>
        <taxon>Magnoliopsida</taxon>
        <taxon>Liliopsida</taxon>
        <taxon>Asparagales</taxon>
        <taxon>Asparagaceae</taxon>
        <taxon>Nolinoideae</taxon>
        <taxon>Polygonatum</taxon>
    </lineage>
</organism>
<dbReference type="EC" id="3.2.2.22" evidence="8 9"/>
<dbReference type="EMBL" id="AF213983">
    <property type="protein sequence ID" value="AAF37218.1"/>
    <property type="molecule type" value="Genomic_DNA"/>
</dbReference>
<dbReference type="SMR" id="Q9M654"/>
<dbReference type="CAZy" id="CBM13">
    <property type="family name" value="Carbohydrate-Binding Module Family 13"/>
</dbReference>
<dbReference type="GlyCosmos" id="Q9M654">
    <property type="glycosylation" value="1 site, No reported glycans"/>
</dbReference>
<dbReference type="GO" id="GO:0030246">
    <property type="term" value="F:carbohydrate binding"/>
    <property type="evidence" value="ECO:0007669"/>
    <property type="project" value="UniProtKB-KW"/>
</dbReference>
<dbReference type="GO" id="GO:0030598">
    <property type="term" value="F:rRNA N-glycosylase activity"/>
    <property type="evidence" value="ECO:0000314"/>
    <property type="project" value="UniProtKB"/>
</dbReference>
<dbReference type="GO" id="GO:0090729">
    <property type="term" value="F:toxin activity"/>
    <property type="evidence" value="ECO:0007669"/>
    <property type="project" value="UniProtKB-KW"/>
</dbReference>
<dbReference type="GO" id="GO:0006952">
    <property type="term" value="P:defense response"/>
    <property type="evidence" value="ECO:0007669"/>
    <property type="project" value="UniProtKB-KW"/>
</dbReference>
<dbReference type="GO" id="GO:0017148">
    <property type="term" value="P:negative regulation of translation"/>
    <property type="evidence" value="ECO:0007669"/>
    <property type="project" value="UniProtKB-KW"/>
</dbReference>
<dbReference type="CDD" id="cd23483">
    <property type="entry name" value="beta-trefoil_Ricin_ebulin-like_rpt1"/>
    <property type="match status" value="1"/>
</dbReference>
<dbReference type="CDD" id="cd23490">
    <property type="entry name" value="beta-trefoil_Ricin_ebulin-like_rpt2"/>
    <property type="match status" value="1"/>
</dbReference>
<dbReference type="FunFam" id="2.80.10.50:FF:000076">
    <property type="entry name" value="Beta-galactoside-specific lectin 1"/>
    <property type="match status" value="1"/>
</dbReference>
<dbReference type="FunFam" id="3.40.420.10:FF:000001">
    <property type="entry name" value="Ricin"/>
    <property type="match status" value="1"/>
</dbReference>
<dbReference type="Gene3D" id="2.80.10.50">
    <property type="match status" value="2"/>
</dbReference>
<dbReference type="Gene3D" id="3.40.420.10">
    <property type="entry name" value="Ricin (A subunit), domain 1"/>
    <property type="match status" value="1"/>
</dbReference>
<dbReference type="Gene3D" id="4.10.470.10">
    <property type="entry name" value="Ricin (A Subunit), domain 2"/>
    <property type="match status" value="1"/>
</dbReference>
<dbReference type="InterPro" id="IPR036041">
    <property type="entry name" value="Ribosome-inact_prot_sf"/>
</dbReference>
<dbReference type="InterPro" id="IPR017989">
    <property type="entry name" value="Ribosome_inactivat_1/2"/>
</dbReference>
<dbReference type="InterPro" id="IPR001574">
    <property type="entry name" value="Ribosome_inactivat_prot"/>
</dbReference>
<dbReference type="InterPro" id="IPR017988">
    <property type="entry name" value="Ribosome_inactivat_prot_CS"/>
</dbReference>
<dbReference type="InterPro" id="IPR016138">
    <property type="entry name" value="Ribosome_inactivat_prot_sub1"/>
</dbReference>
<dbReference type="InterPro" id="IPR016139">
    <property type="entry name" value="Ribosome_inactivat_prot_sub2"/>
</dbReference>
<dbReference type="InterPro" id="IPR035992">
    <property type="entry name" value="Ricin_B-like_lectins"/>
</dbReference>
<dbReference type="InterPro" id="IPR000772">
    <property type="entry name" value="Ricin_B_lectin"/>
</dbReference>
<dbReference type="PANTHER" id="PTHR33453">
    <property type="match status" value="1"/>
</dbReference>
<dbReference type="PANTHER" id="PTHR33453:SF34">
    <property type="entry name" value="RIBOSOME-INACTIVATING PROTEIN"/>
    <property type="match status" value="1"/>
</dbReference>
<dbReference type="Pfam" id="PF00652">
    <property type="entry name" value="Ricin_B_lectin"/>
    <property type="match status" value="2"/>
</dbReference>
<dbReference type="Pfam" id="PF00161">
    <property type="entry name" value="RIP"/>
    <property type="match status" value="1"/>
</dbReference>
<dbReference type="PRINTS" id="PR00396">
    <property type="entry name" value="SHIGARICIN"/>
</dbReference>
<dbReference type="SMART" id="SM00458">
    <property type="entry name" value="RICIN"/>
    <property type="match status" value="2"/>
</dbReference>
<dbReference type="SUPFAM" id="SSF56371">
    <property type="entry name" value="Ribosome inactivating proteins (RIP)"/>
    <property type="match status" value="1"/>
</dbReference>
<dbReference type="SUPFAM" id="SSF50370">
    <property type="entry name" value="Ricin B-like lectins"/>
    <property type="match status" value="2"/>
</dbReference>
<dbReference type="PROSITE" id="PS50231">
    <property type="entry name" value="RICIN_B_LECTIN"/>
    <property type="match status" value="2"/>
</dbReference>
<dbReference type="PROSITE" id="PS00275">
    <property type="entry name" value="SHIGA_RICIN"/>
    <property type="match status" value="1"/>
</dbReference>
<gene>
    <name evidence="13" type="primary">RIPm</name>
</gene>
<evidence type="ECO:0000250" key="1">
    <source>
        <dbReference type="UniProtKB" id="O22415"/>
    </source>
</evidence>
<evidence type="ECO:0000250" key="2">
    <source>
        <dbReference type="UniProtKB" id="P02879"/>
    </source>
</evidence>
<evidence type="ECO:0000250" key="3">
    <source>
        <dbReference type="UniProtKB" id="Q41358"/>
    </source>
</evidence>
<evidence type="ECO:0000250" key="4">
    <source>
        <dbReference type="UniProtKB" id="Q9M653"/>
    </source>
</evidence>
<evidence type="ECO:0000255" key="5"/>
<evidence type="ECO:0000255" key="6">
    <source>
        <dbReference type="PROSITE-ProRule" id="PRU00174"/>
    </source>
</evidence>
<evidence type="ECO:0000255" key="7">
    <source>
        <dbReference type="PROSITE-ProRule" id="PRU00498"/>
    </source>
</evidence>
<evidence type="ECO:0000255" key="8">
    <source>
        <dbReference type="RuleBase" id="RU004915"/>
    </source>
</evidence>
<evidence type="ECO:0000269" key="9">
    <source>
    </source>
</evidence>
<evidence type="ECO:0000303" key="10">
    <source>
    </source>
</evidence>
<evidence type="ECO:0000305" key="11"/>
<evidence type="ECO:0000305" key="12">
    <source>
    </source>
</evidence>
<evidence type="ECO:0000312" key="13">
    <source>
        <dbReference type="EMBL" id="AAF37218.1"/>
    </source>
</evidence>
<protein>
    <recommendedName>
        <fullName evidence="10">Ribosome-inactivating protein PMRIPm</fullName>
    </recommendedName>
    <component>
        <recommendedName>
            <fullName evidence="10">PMRIPm A chain</fullName>
        </recommendedName>
        <alternativeName>
            <fullName evidence="8 10">rRNA N-glycosidase</fullName>
            <ecNumber evidence="8 9">3.2.2.22</ecNumber>
        </alternativeName>
    </component>
    <component>
        <recommendedName>
            <fullName evidence="10">Linker peptide</fullName>
        </recommendedName>
    </component>
    <component>
        <recommendedName>
            <fullName evidence="10">PMRIPm B chain</fullName>
        </recommendedName>
    </component>
</protein>
<feature type="signal peptide" evidence="4">
    <location>
        <begin position="1"/>
        <end position="43"/>
    </location>
</feature>
<feature type="chain" id="PRO_0000439025" description="PMRIPm A chain" evidence="11">
    <location>
        <begin position="44"/>
        <end position="310"/>
    </location>
</feature>
<feature type="peptide" id="PRO_0000439026" description="Linker peptide" evidence="12">
    <location>
        <begin position="311"/>
        <end position="328"/>
    </location>
</feature>
<feature type="chain" id="PRO_0000439027" description="PMRIPm B chain" evidence="12">
    <location>
        <begin position="329"/>
        <end position="604"/>
    </location>
</feature>
<feature type="domain" description="Ricin B-type lectin 1" evidence="6">
    <location>
        <begin position="335"/>
        <end position="463"/>
    </location>
</feature>
<feature type="repeat" description="1-alpha" evidence="3">
    <location>
        <begin position="345"/>
        <end position="387"/>
    </location>
</feature>
<feature type="repeat" description="1-beta" evidence="3">
    <location>
        <begin position="389"/>
        <end position="429"/>
    </location>
</feature>
<feature type="repeat" description="1-gamma" evidence="3">
    <location>
        <begin position="432"/>
        <end position="465"/>
    </location>
</feature>
<feature type="domain" description="Ricin B-type lectin 2" evidence="6">
    <location>
        <begin position="466"/>
        <end position="598"/>
    </location>
</feature>
<feature type="repeat" description="2-alpha" evidence="3">
    <location>
        <begin position="477"/>
        <end position="521"/>
    </location>
</feature>
<feature type="repeat" description="2-beta" evidence="3">
    <location>
        <begin position="525"/>
        <end position="563"/>
    </location>
</feature>
<feature type="repeat" description="2-gamma" evidence="3">
    <location>
        <begin position="566"/>
        <end position="599"/>
    </location>
</feature>
<feature type="active site" evidence="2">
    <location>
        <position position="211"/>
    </location>
</feature>
<feature type="glycosylation site" description="N-linked (GlcNAc...) asparagine" evidence="7">
    <location>
        <position position="490"/>
    </location>
</feature>
<feature type="disulfide bond" description="Interchain (between A and B chains)" evidence="5">
    <location>
        <begin position="301"/>
        <end position="332"/>
    </location>
</feature>
<feature type="disulfide bond" evidence="6">
    <location>
        <begin position="348"/>
        <end position="367"/>
    </location>
</feature>
<feature type="disulfide bond" evidence="6">
    <location>
        <begin position="392"/>
        <end position="409"/>
    </location>
</feature>
<feature type="disulfide bond" evidence="6">
    <location>
        <begin position="480"/>
        <end position="502"/>
    </location>
</feature>
<feature type="sequence conflict" description="In Ref. 1; AA sequence." evidence="11" ref="1">
    <original>KC</original>
    <variation>MP</variation>
    <location>
        <begin position="331"/>
        <end position="332"/>
    </location>
</feature>
<keyword id="KW-0903">Direct protein sequencing</keyword>
<keyword id="KW-1015">Disulfide bond</keyword>
<keyword id="KW-0325">Glycoprotein</keyword>
<keyword id="KW-0378">Hydrolase</keyword>
<keyword id="KW-0430">Lectin</keyword>
<keyword id="KW-0611">Plant defense</keyword>
<keyword id="KW-0652">Protein synthesis inhibitor</keyword>
<keyword id="KW-0677">Repeat</keyword>
<keyword id="KW-0732">Signal</keyword>
<keyword id="KW-0800">Toxin</keyword>
<proteinExistence type="evidence at protein level"/>
<reference evidence="13" key="1">
    <citation type="journal article" date="2000" name="Eur. J. Biochem.">
        <title>Characterization and molecular cloning of two different type 2 ribosome-inactivating proteins from the monocotyledonous plant Polygonatum multiflorum.</title>
        <authorList>
            <person name="Van Damme E.J."/>
            <person name="Hao Q."/>
            <person name="Charels D."/>
            <person name="Barre A."/>
            <person name="Rouge P."/>
            <person name="Van Leuven F."/>
            <person name="Peumans W.J."/>
        </authorList>
    </citation>
    <scope>NUCLEOTIDE SEQUENCE [GENOMIC DNA]</scope>
    <scope>PROTEIN SEQUENCE OF 329-339</scope>
    <scope>FUNCTION</scope>
    <scope>CATALYTIC ACTIVITY</scope>
    <scope>ACTIVITY REGULATION</scope>
    <scope>SUBUNIT</scope>
    <scope>TISSUE SPECIFICITY</scope>
    <scope>PTM</scope>
    <scope>GLYCOSYLATION</scope>
    <scope>3D-STRUCTURE MODELING</scope>
    <scope>PHYLOGENETIC ANALYSIS</scope>
    <source>
        <tissue evidence="10">Meristem</tissue>
    </source>
</reference>